<sequence length="40" mass="4470">MINLPSLFVPLVGLLFPAVAMASLFLHVEKRLLFSTKKIN</sequence>
<gene>
    <name type="primary">psaI</name>
</gene>
<organism>
    <name type="scientific">Pisum sativum</name>
    <name type="common">Garden pea</name>
    <name type="synonym">Lathyrus oleraceus</name>
    <dbReference type="NCBI Taxonomy" id="3888"/>
    <lineage>
        <taxon>Eukaryota</taxon>
        <taxon>Viridiplantae</taxon>
        <taxon>Streptophyta</taxon>
        <taxon>Embryophyta</taxon>
        <taxon>Tracheophyta</taxon>
        <taxon>Spermatophyta</taxon>
        <taxon>Magnoliopsida</taxon>
        <taxon>eudicotyledons</taxon>
        <taxon>Gunneridae</taxon>
        <taxon>Pentapetalae</taxon>
        <taxon>rosids</taxon>
        <taxon>fabids</taxon>
        <taxon>Fabales</taxon>
        <taxon>Fabaceae</taxon>
        <taxon>Papilionoideae</taxon>
        <taxon>50 kb inversion clade</taxon>
        <taxon>NPAAA clade</taxon>
        <taxon>Hologalegina</taxon>
        <taxon>IRL clade</taxon>
        <taxon>Fabeae</taxon>
        <taxon>Pisum</taxon>
    </lineage>
</organism>
<evidence type="ECO:0000250" key="1"/>
<evidence type="ECO:0000255" key="2"/>
<evidence type="ECO:0000305" key="3"/>
<evidence type="ECO:0007829" key="4">
    <source>
        <dbReference type="PDB" id="6LY5"/>
    </source>
</evidence>
<comment type="function">
    <text>May help in the organization of the PsaL subunit.</text>
</comment>
<comment type="subcellular location">
    <subcellularLocation>
        <location evidence="1">Plastid</location>
        <location evidence="1">Chloroplast thylakoid membrane</location>
        <topology evidence="1">Single-pass membrane protein</topology>
    </subcellularLocation>
</comment>
<comment type="similarity">
    <text evidence="3">Belongs to the PsaI family.</text>
</comment>
<reference key="1">
    <citation type="journal article" date="1991" name="Curr. Genet.">
        <title>Sequence and transcriptional analysis of the gene cluster trnQ-zfpA-psaI-ORF231-petA in pea chloroplasts.</title>
        <authorList>
            <person name="Nagano Y."/>
            <person name="Matsuno R."/>
            <person name="Sasaki Y."/>
        </authorList>
    </citation>
    <scope>NUCLEOTIDE SEQUENCE [GENOMIC DNA]</scope>
    <source>
        <strain>cv. Alaska</strain>
    </source>
</reference>
<reference key="2">
    <citation type="journal article" date="1991" name="Curr. Genet.">
        <title>Pea chloroplast genes encoding a 4 kDa polypeptide of photosystem I and a putative enzyme of C1 metabolism.</title>
        <authorList>
            <person name="Smith A.G."/>
            <person name="Wilson R.J."/>
            <person name="Kaethner T.M."/>
            <person name="Willey D.L."/>
            <person name="Gray J.C."/>
        </authorList>
    </citation>
    <scope>NUCLEOTIDE SEQUENCE [GENOMIC DNA]</scope>
    <source>
        <strain>cv. Alaska</strain>
    </source>
</reference>
<reference key="3">
    <citation type="journal article" date="1990" name="FEBS Lett.">
        <title>Polypeptide composition of higher plant photosystem I complex. Identification of psaI, psaJ and psaK gene products.</title>
        <authorList>
            <person name="Ikeuchi M."/>
            <person name="Hirano A."/>
            <person name="Hiyama T."/>
            <person name="Inoue Y."/>
        </authorList>
    </citation>
    <scope>PROTEIN SEQUENCE OF 1-16</scope>
</reference>
<reference key="4">
    <citation type="journal article" date="1993" name="FEBS Lett.">
        <title>Subunit III of the chloroplast ATP-synthase can form a Ca(2+)-binding site on the lumenal side of the thylakoid membrane.</title>
        <authorList>
            <person name="Zakharov S.D."/>
            <person name="Ewy R.G."/>
            <person name="Dilley R.A."/>
        </authorList>
    </citation>
    <scope>PROTEIN SEQUENCE OF 3-25</scope>
</reference>
<accession>P17227</accession>
<protein>
    <recommendedName>
        <fullName>Photosystem I reaction center subunit VIII</fullName>
        <shortName>PSI-I</shortName>
    </recommendedName>
</protein>
<dbReference type="EMBL" id="X56315">
    <property type="protein sequence ID" value="CAA39757.1"/>
    <property type="molecule type" value="Genomic_DNA"/>
</dbReference>
<dbReference type="EMBL" id="X54750">
    <property type="protein sequence ID" value="CAA38547.1"/>
    <property type="molecule type" value="Genomic_DNA"/>
</dbReference>
<dbReference type="PIR" id="S17921">
    <property type="entry name" value="S17921"/>
</dbReference>
<dbReference type="RefSeq" id="YP_003587557.1">
    <property type="nucleotide sequence ID" value="NC_014057.1"/>
</dbReference>
<dbReference type="PDB" id="2O01">
    <property type="method" value="X-ray"/>
    <property type="resolution" value="3.40 A"/>
    <property type="chains" value="I=1-30"/>
</dbReference>
<dbReference type="PDB" id="2WSC">
    <property type="method" value="X-ray"/>
    <property type="resolution" value="3.30 A"/>
    <property type="chains" value="I=1-40"/>
</dbReference>
<dbReference type="PDB" id="2WSE">
    <property type="method" value="X-ray"/>
    <property type="resolution" value="3.49 A"/>
    <property type="chains" value="I=1-40"/>
</dbReference>
<dbReference type="PDB" id="2WSF">
    <property type="method" value="X-ray"/>
    <property type="resolution" value="3.48 A"/>
    <property type="chains" value="I=1-40"/>
</dbReference>
<dbReference type="PDB" id="3LW5">
    <property type="method" value="X-ray"/>
    <property type="resolution" value="3.30 A"/>
    <property type="chains" value="I=1-30"/>
</dbReference>
<dbReference type="PDB" id="4RKU">
    <property type="method" value="X-ray"/>
    <property type="resolution" value="3.00 A"/>
    <property type="chains" value="I=5-30"/>
</dbReference>
<dbReference type="PDB" id="4XK8">
    <property type="method" value="X-ray"/>
    <property type="resolution" value="2.80 A"/>
    <property type="chains" value="I/i=2-31"/>
</dbReference>
<dbReference type="PDB" id="4Y28">
    <property type="method" value="X-ray"/>
    <property type="resolution" value="2.80 A"/>
    <property type="chains" value="I=3-32"/>
</dbReference>
<dbReference type="PDB" id="5L8R">
    <property type="method" value="X-ray"/>
    <property type="resolution" value="2.60 A"/>
    <property type="chains" value="I=1-40"/>
</dbReference>
<dbReference type="PDB" id="6LY5">
    <property type="method" value="EM"/>
    <property type="resolution" value="2.38 A"/>
    <property type="chains" value="i=1-40"/>
</dbReference>
<dbReference type="PDB" id="6YAC">
    <property type="method" value="EM"/>
    <property type="resolution" value="2.50 A"/>
    <property type="chains" value="I=2-32"/>
</dbReference>
<dbReference type="PDB" id="6YEZ">
    <property type="method" value="EM"/>
    <property type="resolution" value="2.70 A"/>
    <property type="chains" value="I=2-32"/>
</dbReference>
<dbReference type="PDB" id="6ZOO">
    <property type="method" value="EM"/>
    <property type="resolution" value="2.74 A"/>
    <property type="chains" value="I=2-32"/>
</dbReference>
<dbReference type="PDB" id="6ZXS">
    <property type="method" value="X-ray"/>
    <property type="resolution" value="3.00 A"/>
    <property type="chains" value="I=3-32"/>
</dbReference>
<dbReference type="PDB" id="7DKZ">
    <property type="method" value="X-ray"/>
    <property type="resolution" value="2.39 A"/>
    <property type="chains" value="I=1-40"/>
</dbReference>
<dbReference type="PDBsum" id="2O01"/>
<dbReference type="PDBsum" id="2WSC"/>
<dbReference type="PDBsum" id="2WSE"/>
<dbReference type="PDBsum" id="2WSF"/>
<dbReference type="PDBsum" id="3LW5"/>
<dbReference type="PDBsum" id="4RKU"/>
<dbReference type="PDBsum" id="4XK8"/>
<dbReference type="PDBsum" id="4Y28"/>
<dbReference type="PDBsum" id="5L8R"/>
<dbReference type="PDBsum" id="6LY5"/>
<dbReference type="PDBsum" id="6YAC"/>
<dbReference type="PDBsum" id="6YEZ"/>
<dbReference type="PDBsum" id="6ZOO"/>
<dbReference type="PDBsum" id="6ZXS"/>
<dbReference type="PDBsum" id="7DKZ"/>
<dbReference type="EMDB" id="EMD-10746"/>
<dbReference type="EMDB" id="EMD-10798"/>
<dbReference type="EMDB" id="EMD-11326"/>
<dbReference type="SMR" id="P17227"/>
<dbReference type="DIP" id="DIP-60289N"/>
<dbReference type="IntAct" id="P17227">
    <property type="interactions" value="3"/>
</dbReference>
<dbReference type="GeneID" id="9073045"/>
<dbReference type="BRENDA" id="1.97.1.12">
    <property type="organism ID" value="4872"/>
</dbReference>
<dbReference type="EvolutionaryTrace" id="P17227"/>
<dbReference type="GO" id="GO:0009535">
    <property type="term" value="C:chloroplast thylakoid membrane"/>
    <property type="evidence" value="ECO:0007669"/>
    <property type="project" value="UniProtKB-SubCell"/>
</dbReference>
<dbReference type="GO" id="GO:0009522">
    <property type="term" value="C:photosystem I"/>
    <property type="evidence" value="ECO:0007669"/>
    <property type="project" value="UniProtKB-KW"/>
</dbReference>
<dbReference type="GO" id="GO:0015979">
    <property type="term" value="P:photosynthesis"/>
    <property type="evidence" value="ECO:0007669"/>
    <property type="project" value="UniProtKB-UniRule"/>
</dbReference>
<dbReference type="HAMAP" id="MF_00431">
    <property type="entry name" value="PSI_PsaI"/>
    <property type="match status" value="1"/>
</dbReference>
<dbReference type="InterPro" id="IPR001302">
    <property type="entry name" value="PSI_PsaI"/>
</dbReference>
<dbReference type="InterPro" id="IPR036357">
    <property type="entry name" value="PSI_PsaI_sf"/>
</dbReference>
<dbReference type="NCBIfam" id="TIGR03052">
    <property type="entry name" value="PS_I_psaI"/>
    <property type="match status" value="1"/>
</dbReference>
<dbReference type="PANTHER" id="PTHR35775">
    <property type="match status" value="1"/>
</dbReference>
<dbReference type="PANTHER" id="PTHR35775:SF2">
    <property type="entry name" value="PHOTOSYSTEM I REACTION CENTER SUBUNIT VIII"/>
    <property type="match status" value="1"/>
</dbReference>
<dbReference type="Pfam" id="PF00796">
    <property type="entry name" value="PSI_8"/>
    <property type="match status" value="1"/>
</dbReference>
<dbReference type="SUPFAM" id="SSF81540">
    <property type="entry name" value="Subunit VIII of photosystem I reaction centre, PsaI"/>
    <property type="match status" value="1"/>
</dbReference>
<proteinExistence type="evidence at protein level"/>
<name>PSAI_PEA</name>
<keyword id="KW-0002">3D-structure</keyword>
<keyword id="KW-0150">Chloroplast</keyword>
<keyword id="KW-0903">Direct protein sequencing</keyword>
<keyword id="KW-0472">Membrane</keyword>
<keyword id="KW-0602">Photosynthesis</keyword>
<keyword id="KW-0603">Photosystem I</keyword>
<keyword id="KW-0934">Plastid</keyword>
<keyword id="KW-0793">Thylakoid</keyword>
<keyword id="KW-0812">Transmembrane</keyword>
<keyword id="KW-1133">Transmembrane helix</keyword>
<feature type="chain" id="PRO_0000194668" description="Photosystem I reaction center subunit VIII">
    <location>
        <begin position="1"/>
        <end position="40"/>
    </location>
</feature>
<feature type="transmembrane region" description="Helical" evidence="2">
    <location>
        <begin position="8"/>
        <end position="28"/>
    </location>
</feature>
<feature type="sequence conflict" description="In Ref. 4; AA sequence." evidence="3" ref="4">
    <original>G</original>
    <variation>S</variation>
    <location>
        <position position="13"/>
    </location>
</feature>
<feature type="sequence conflict" description="In Ref. 4; AA sequence." evidence="3" ref="4">
    <original>A</original>
    <variation>R</variation>
    <location>
        <position position="22"/>
    </location>
</feature>
<feature type="helix" evidence="4">
    <location>
        <begin position="5"/>
        <end position="13"/>
    </location>
</feature>
<feature type="helix" evidence="4">
    <location>
        <begin position="15"/>
        <end position="28"/>
    </location>
</feature>
<geneLocation type="chloroplast"/>